<proteinExistence type="inferred from homology"/>
<gene>
    <name evidence="1" type="primary">rpiA</name>
    <name type="ordered locus">Mevan_0505</name>
</gene>
<keyword id="KW-0413">Isomerase</keyword>
<feature type="chain" id="PRO_1000016950" description="Ribose-5-phosphate isomerase A">
    <location>
        <begin position="1"/>
        <end position="239"/>
    </location>
</feature>
<feature type="active site" description="Proton acceptor" evidence="1">
    <location>
        <position position="119"/>
    </location>
</feature>
<feature type="binding site" evidence="1">
    <location>
        <begin position="40"/>
        <end position="43"/>
    </location>
    <ligand>
        <name>substrate</name>
    </ligand>
</feature>
<feature type="binding site" evidence="1">
    <location>
        <begin position="96"/>
        <end position="99"/>
    </location>
    <ligand>
        <name>substrate</name>
    </ligand>
</feature>
<feature type="binding site" evidence="1">
    <location>
        <begin position="110"/>
        <end position="113"/>
    </location>
    <ligand>
        <name>substrate</name>
    </ligand>
</feature>
<feature type="binding site" evidence="1">
    <location>
        <position position="137"/>
    </location>
    <ligand>
        <name>substrate</name>
    </ligand>
</feature>
<protein>
    <recommendedName>
        <fullName evidence="1">Ribose-5-phosphate isomerase A</fullName>
        <ecNumber evidence="1">5.3.1.6</ecNumber>
    </recommendedName>
    <alternativeName>
        <fullName evidence="1">Phosphoriboisomerase A</fullName>
        <shortName evidence="1">PRI</shortName>
    </alternativeName>
</protein>
<dbReference type="EC" id="5.3.1.6" evidence="1"/>
<dbReference type="EMBL" id="CP000742">
    <property type="protein sequence ID" value="ABR54412.1"/>
    <property type="molecule type" value="Genomic_DNA"/>
</dbReference>
<dbReference type="RefSeq" id="WP_011972315.1">
    <property type="nucleotide sequence ID" value="NC_009634.1"/>
</dbReference>
<dbReference type="SMR" id="A6UPJ0"/>
<dbReference type="STRING" id="406327.Mevan_0505"/>
<dbReference type="GeneID" id="5325659"/>
<dbReference type="KEGG" id="mvn:Mevan_0505"/>
<dbReference type="eggNOG" id="arCOG01122">
    <property type="taxonomic scope" value="Archaea"/>
</dbReference>
<dbReference type="HOGENOM" id="CLU_056590_1_1_2"/>
<dbReference type="OrthoDB" id="19013at2157"/>
<dbReference type="UniPathway" id="UPA00115">
    <property type="reaction ID" value="UER00412"/>
</dbReference>
<dbReference type="Proteomes" id="UP000001107">
    <property type="component" value="Chromosome"/>
</dbReference>
<dbReference type="GO" id="GO:0005829">
    <property type="term" value="C:cytosol"/>
    <property type="evidence" value="ECO:0007669"/>
    <property type="project" value="TreeGrafter"/>
</dbReference>
<dbReference type="GO" id="GO:0004751">
    <property type="term" value="F:ribose-5-phosphate isomerase activity"/>
    <property type="evidence" value="ECO:0007669"/>
    <property type="project" value="UniProtKB-UniRule"/>
</dbReference>
<dbReference type="GO" id="GO:0006014">
    <property type="term" value="P:D-ribose metabolic process"/>
    <property type="evidence" value="ECO:0007669"/>
    <property type="project" value="TreeGrafter"/>
</dbReference>
<dbReference type="GO" id="GO:0009052">
    <property type="term" value="P:pentose-phosphate shunt, non-oxidative branch"/>
    <property type="evidence" value="ECO:0007669"/>
    <property type="project" value="UniProtKB-UniRule"/>
</dbReference>
<dbReference type="CDD" id="cd01398">
    <property type="entry name" value="RPI_A"/>
    <property type="match status" value="1"/>
</dbReference>
<dbReference type="FunFam" id="3.40.50.1360:FF:000001">
    <property type="entry name" value="Ribose-5-phosphate isomerase A"/>
    <property type="match status" value="1"/>
</dbReference>
<dbReference type="Gene3D" id="3.30.70.260">
    <property type="match status" value="1"/>
</dbReference>
<dbReference type="Gene3D" id="3.40.50.1360">
    <property type="match status" value="1"/>
</dbReference>
<dbReference type="HAMAP" id="MF_00170">
    <property type="entry name" value="Rib_5P_isom_A"/>
    <property type="match status" value="1"/>
</dbReference>
<dbReference type="InterPro" id="IPR037171">
    <property type="entry name" value="NagB/RpiA_transferase-like"/>
</dbReference>
<dbReference type="InterPro" id="IPR020672">
    <property type="entry name" value="Ribose5P_isomerase_typA_subgr"/>
</dbReference>
<dbReference type="InterPro" id="IPR004788">
    <property type="entry name" value="Ribose5P_isomerase_type_A"/>
</dbReference>
<dbReference type="NCBIfam" id="NF001924">
    <property type="entry name" value="PRK00702.1"/>
    <property type="match status" value="1"/>
</dbReference>
<dbReference type="NCBIfam" id="TIGR00021">
    <property type="entry name" value="rpiA"/>
    <property type="match status" value="1"/>
</dbReference>
<dbReference type="PANTHER" id="PTHR11934">
    <property type="entry name" value="RIBOSE-5-PHOSPHATE ISOMERASE"/>
    <property type="match status" value="1"/>
</dbReference>
<dbReference type="PANTHER" id="PTHR11934:SF0">
    <property type="entry name" value="RIBOSE-5-PHOSPHATE ISOMERASE"/>
    <property type="match status" value="1"/>
</dbReference>
<dbReference type="Pfam" id="PF06026">
    <property type="entry name" value="Rib_5-P_isom_A"/>
    <property type="match status" value="1"/>
</dbReference>
<dbReference type="SUPFAM" id="SSF75445">
    <property type="entry name" value="D-ribose-5-phosphate isomerase (RpiA), lid domain"/>
    <property type="match status" value="1"/>
</dbReference>
<dbReference type="SUPFAM" id="SSF100950">
    <property type="entry name" value="NagB/RpiA/CoA transferase-like"/>
    <property type="match status" value="1"/>
</dbReference>
<comment type="function">
    <text evidence="1">Catalyzes the reversible conversion of ribose-5-phosphate to ribulose 5-phosphate.</text>
</comment>
<comment type="catalytic activity">
    <reaction evidence="1">
        <text>aldehydo-D-ribose 5-phosphate = D-ribulose 5-phosphate</text>
        <dbReference type="Rhea" id="RHEA:14657"/>
        <dbReference type="ChEBI" id="CHEBI:58121"/>
        <dbReference type="ChEBI" id="CHEBI:58273"/>
        <dbReference type="EC" id="5.3.1.6"/>
    </reaction>
</comment>
<comment type="pathway">
    <text evidence="1">Carbohydrate degradation; pentose phosphate pathway; D-ribose 5-phosphate from D-ribulose 5-phosphate (non-oxidative stage): step 1/1.</text>
</comment>
<comment type="subunit">
    <text evidence="1">Homodimer.</text>
</comment>
<comment type="similarity">
    <text evidence="1">Belongs to the ribose 5-phosphate isomerase family.</text>
</comment>
<name>RPIA_METVS</name>
<reference key="1">
    <citation type="submission" date="2007-06" db="EMBL/GenBank/DDBJ databases">
        <title>Complete sequence of Methanococcus vannielii SB.</title>
        <authorList>
            <consortium name="US DOE Joint Genome Institute"/>
            <person name="Copeland A."/>
            <person name="Lucas S."/>
            <person name="Lapidus A."/>
            <person name="Barry K."/>
            <person name="Glavina del Rio T."/>
            <person name="Dalin E."/>
            <person name="Tice H."/>
            <person name="Pitluck S."/>
            <person name="Chain P."/>
            <person name="Malfatti S."/>
            <person name="Shin M."/>
            <person name="Vergez L."/>
            <person name="Schmutz J."/>
            <person name="Larimer F."/>
            <person name="Land M."/>
            <person name="Hauser L."/>
            <person name="Kyrpides N."/>
            <person name="Anderson I."/>
            <person name="Sieprawska-Lupa M."/>
            <person name="Whitman W.B."/>
            <person name="Richardson P."/>
        </authorList>
    </citation>
    <scope>NUCLEOTIDE SEQUENCE [LARGE SCALE GENOMIC DNA]</scope>
    <source>
        <strain>ATCC 35089 / DSM 1224 / JCM 13029 / OCM 148 / SB</strain>
    </source>
</reference>
<evidence type="ECO:0000255" key="1">
    <source>
        <dbReference type="HAMAP-Rule" id="MF_00170"/>
    </source>
</evidence>
<organism>
    <name type="scientific">Methanococcus vannielii (strain ATCC 35089 / DSM 1224 / JCM 13029 / OCM 148 / SB)</name>
    <dbReference type="NCBI Taxonomy" id="406327"/>
    <lineage>
        <taxon>Archaea</taxon>
        <taxon>Methanobacteriati</taxon>
        <taxon>Methanobacteriota</taxon>
        <taxon>Methanomada group</taxon>
        <taxon>Methanococci</taxon>
        <taxon>Methanococcales</taxon>
        <taxon>Methanococcaceae</taxon>
        <taxon>Methanococcus</taxon>
    </lineage>
</organism>
<sequence>MAKPKKSDEEVSIDSDSLKIKVAKEAAKLIKDEMVVGLGSGSTANLFIQELGKRVIEEELYIYGVPTSFDSRMMANQSGIPLISLDQCGEIDIAIDGADEIDKKTFSLIKGGGGCHTMEKIVDYYAKEFVVLADESKMVDSLGENTPVPLEVIPFSYSTVLSKLLKINAAPAIRSGSGKMGPVITDNGNMIIDVFINIEDAEETETMLNSIPGVLENGIFTKCDKVLIGTSKKVEVLKK</sequence>
<accession>A6UPJ0</accession>